<accession>Q6G0C7</accession>
<organism>
    <name type="scientific">Bartonella quintana (strain Toulouse)</name>
    <name type="common">Rochalimaea quintana</name>
    <dbReference type="NCBI Taxonomy" id="283165"/>
    <lineage>
        <taxon>Bacteria</taxon>
        <taxon>Pseudomonadati</taxon>
        <taxon>Pseudomonadota</taxon>
        <taxon>Alphaproteobacteria</taxon>
        <taxon>Hyphomicrobiales</taxon>
        <taxon>Bartonellaceae</taxon>
        <taxon>Bartonella</taxon>
    </lineage>
</organism>
<proteinExistence type="inferred from homology"/>
<name>Y364_BARQU</name>
<feature type="chain" id="PRO_0000258800" description="UPF0301 protein BQ03640">
    <location>
        <begin position="1"/>
        <end position="194"/>
    </location>
</feature>
<protein>
    <recommendedName>
        <fullName evidence="1">UPF0301 protein BQ03640</fullName>
    </recommendedName>
</protein>
<comment type="similarity">
    <text evidence="1">Belongs to the UPF0301 (AlgH) family.</text>
</comment>
<reference key="1">
    <citation type="journal article" date="2004" name="Proc. Natl. Acad. Sci. U.S.A.">
        <title>The louse-borne human pathogen Bartonella quintana is a genomic derivative of the zoonotic agent Bartonella henselae.</title>
        <authorList>
            <person name="Alsmark U.C.M."/>
            <person name="Frank A.C."/>
            <person name="Karlberg E.O."/>
            <person name="Legault B.-A."/>
            <person name="Ardell D.H."/>
            <person name="Canbaeck B."/>
            <person name="Eriksson A.-S."/>
            <person name="Naeslund A.K."/>
            <person name="Handley S.A."/>
            <person name="Huvet M."/>
            <person name="La Scola B."/>
            <person name="Holmberg M."/>
            <person name="Andersson S.G.E."/>
        </authorList>
    </citation>
    <scope>NUCLEOTIDE SEQUENCE [LARGE SCALE GENOMIC DNA]</scope>
    <source>
        <strain>Toulouse</strain>
    </source>
</reference>
<evidence type="ECO:0000255" key="1">
    <source>
        <dbReference type="HAMAP-Rule" id="MF_00758"/>
    </source>
</evidence>
<dbReference type="EMBL" id="BX897700">
    <property type="protein sequence ID" value="CAF25864.1"/>
    <property type="molecule type" value="Genomic_DNA"/>
</dbReference>
<dbReference type="RefSeq" id="WP_011179155.1">
    <property type="nucleotide sequence ID" value="NC_005955.1"/>
</dbReference>
<dbReference type="SMR" id="Q6G0C7"/>
<dbReference type="KEGG" id="bqu:BQ03640"/>
<dbReference type="eggNOG" id="COG1678">
    <property type="taxonomic scope" value="Bacteria"/>
</dbReference>
<dbReference type="HOGENOM" id="CLU_057596_1_0_5"/>
<dbReference type="OrthoDB" id="9807486at2"/>
<dbReference type="Proteomes" id="UP000000597">
    <property type="component" value="Chromosome"/>
</dbReference>
<dbReference type="GO" id="GO:0005829">
    <property type="term" value="C:cytosol"/>
    <property type="evidence" value="ECO:0007669"/>
    <property type="project" value="TreeGrafter"/>
</dbReference>
<dbReference type="Gene3D" id="3.40.1740.10">
    <property type="entry name" value="VC0467-like"/>
    <property type="match status" value="1"/>
</dbReference>
<dbReference type="HAMAP" id="MF_00758">
    <property type="entry name" value="UPF0301"/>
    <property type="match status" value="1"/>
</dbReference>
<dbReference type="InterPro" id="IPR003774">
    <property type="entry name" value="AlgH-like"/>
</dbReference>
<dbReference type="NCBIfam" id="NF001268">
    <property type="entry name" value="PRK00228.1-4"/>
    <property type="match status" value="1"/>
</dbReference>
<dbReference type="PANTHER" id="PTHR30327">
    <property type="entry name" value="UNCHARACTERIZED PROTEIN YQGE"/>
    <property type="match status" value="1"/>
</dbReference>
<dbReference type="PANTHER" id="PTHR30327:SF1">
    <property type="entry name" value="UPF0301 PROTEIN YQGE"/>
    <property type="match status" value="1"/>
</dbReference>
<dbReference type="Pfam" id="PF02622">
    <property type="entry name" value="DUF179"/>
    <property type="match status" value="1"/>
</dbReference>
<dbReference type="SUPFAM" id="SSF143456">
    <property type="entry name" value="VC0467-like"/>
    <property type="match status" value="1"/>
</dbReference>
<sequence length="194" mass="21410">MKQRDGFLGGQLLIAMPGMNDNRFIRSVVYVCAHSDAGAMGIILNQLHHIDFPELLLHLGVISGVQKKHLSEPIKNFPVRYGGPVDPLRGFVLHSDDYTCKETVLVAEKICFTATIDILKAISCEQGPQHALIALGYAGWKPGQLETEISTNGWLISPTSPSFLFESDLSRKYDESLIRMGINPTYLVSEMGHA</sequence>
<gene>
    <name type="ordered locus">BQ03640</name>
</gene>